<name>BTGE_ASPTN</name>
<sequence>MKAAILATAAALTGSALADVAHMRRGHDSFHHRRAMHAQEPEETCGCTTEVITFYGSPTLVPISTPSATPTPAPAPETTSTEEVTTTLHSTSTSTVTVTATPETPEVTLPTPGVTSFSSTGVYTIPATTLTVTDTTTVCGATSTELPSGTATYGGVTTVVETSTTVVCPYATVKPSGSTVTSVIETTTYVCPSAGTYTVVPPTTTYVPTSTVMVYPTPATFTPGTYTQDAQTVTVTRTDYTYVCPTFHPELPSSSAPAPTTSAVPTTTAVPTSTVVPSSTTSVPASSSSSSAEVPQTTGSGQMGMTYSPYTNAGGCKSKADVLQDIATIKQKGFTHVRVYSTDCSSLEWIGEGAKQQGLIMILGVYIDSSGVSGAQSQVTDIANWAEWDLVSLIVVGNEAIQNGYCTASELASFITSAKQAFKAAGYSGQVTTTEPINVWESSGSALCSSIDILGANIHPFFNSEVTASQAGKFVQSQVDILEKICPGKDVINLETGWPSKGSANGLAIPGTSQQSEAIKSLRNDVGALSVFFSFSNDLWKSPGAFDVEQYWGCIDQF</sequence>
<accession>Q0CEX9</accession>
<protein>
    <recommendedName>
        <fullName>Probable beta-glucosidase btgE</fullName>
        <ecNumber>3.2.1.21</ecNumber>
    </recommendedName>
    <alternativeName>
        <fullName>Beta-D-glucoside glucohydrolase btgE</fullName>
    </alternativeName>
    <alternativeName>
        <fullName>Cellobiase btgE</fullName>
    </alternativeName>
    <alternativeName>
        <fullName>Gentiobiase btgE</fullName>
    </alternativeName>
</protein>
<feature type="signal peptide" evidence="3">
    <location>
        <begin position="1"/>
        <end position="18"/>
    </location>
</feature>
<feature type="chain" id="PRO_0000395135" description="Probable beta-glucosidase btgE">
    <location>
        <begin position="19"/>
        <end position="558"/>
    </location>
</feature>
<feature type="region of interest" description="Disordered" evidence="4">
    <location>
        <begin position="64"/>
        <end position="105"/>
    </location>
</feature>
<feature type="region of interest" description="Disordered" evidence="4">
    <location>
        <begin position="251"/>
        <end position="305"/>
    </location>
</feature>
<feature type="compositionally biased region" description="Low complexity" evidence="4">
    <location>
        <begin position="76"/>
        <end position="105"/>
    </location>
</feature>
<feature type="compositionally biased region" description="Low complexity" evidence="4">
    <location>
        <begin position="252"/>
        <end position="292"/>
    </location>
</feature>
<feature type="compositionally biased region" description="Polar residues" evidence="4">
    <location>
        <begin position="293"/>
        <end position="305"/>
    </location>
</feature>
<feature type="active site" description="Proton donor" evidence="2">
    <location>
        <position position="399"/>
    </location>
</feature>
<feature type="active site" description="Nucleophile" evidence="2">
    <location>
        <position position="495"/>
    </location>
</feature>
<evidence type="ECO:0000250" key="1"/>
<evidence type="ECO:0000250" key="2">
    <source>
        <dbReference type="UniProtKB" id="O22317"/>
    </source>
</evidence>
<evidence type="ECO:0000255" key="3"/>
<evidence type="ECO:0000256" key="4">
    <source>
        <dbReference type="SAM" id="MobiDB-lite"/>
    </source>
</evidence>
<evidence type="ECO:0000305" key="5"/>
<organism>
    <name type="scientific">Aspergillus terreus (strain NIH 2624 / FGSC A1156)</name>
    <dbReference type="NCBI Taxonomy" id="341663"/>
    <lineage>
        <taxon>Eukaryota</taxon>
        <taxon>Fungi</taxon>
        <taxon>Dikarya</taxon>
        <taxon>Ascomycota</taxon>
        <taxon>Pezizomycotina</taxon>
        <taxon>Eurotiomycetes</taxon>
        <taxon>Eurotiomycetidae</taxon>
        <taxon>Eurotiales</taxon>
        <taxon>Aspergillaceae</taxon>
        <taxon>Aspergillus</taxon>
        <taxon>Aspergillus subgen. Circumdati</taxon>
    </lineage>
</organism>
<comment type="function">
    <text evidence="1">Beta-glucosidases are one of a number of cellulolytic enzymes involved in the degradation of cellulosic biomass. Catalyzes the last step releasing glucose from the inhibitory cellobiose (By similarity).</text>
</comment>
<comment type="catalytic activity">
    <reaction>
        <text>Hydrolysis of terminal, non-reducing beta-D-glucosyl residues with release of beta-D-glucose.</text>
        <dbReference type="EC" id="3.2.1.21"/>
    </reaction>
</comment>
<comment type="pathway">
    <text>Glycan metabolism; cellulose degradation.</text>
</comment>
<comment type="subcellular location">
    <subcellularLocation>
        <location evidence="1">Secreted</location>
        <location evidence="1">Cell wall</location>
    </subcellularLocation>
    <text evidence="1">Covalently-linked to the cell wall.</text>
</comment>
<comment type="similarity">
    <text evidence="5">Belongs to the glycosyl hydrolase 17 family.</text>
</comment>
<reference key="1">
    <citation type="submission" date="2005-09" db="EMBL/GenBank/DDBJ databases">
        <title>Annotation of the Aspergillus terreus NIH2624 genome.</title>
        <authorList>
            <person name="Birren B.W."/>
            <person name="Lander E.S."/>
            <person name="Galagan J.E."/>
            <person name="Nusbaum C."/>
            <person name="Devon K."/>
            <person name="Henn M."/>
            <person name="Ma L.-J."/>
            <person name="Jaffe D.B."/>
            <person name="Butler J."/>
            <person name="Alvarez P."/>
            <person name="Gnerre S."/>
            <person name="Grabherr M."/>
            <person name="Kleber M."/>
            <person name="Mauceli E.W."/>
            <person name="Brockman W."/>
            <person name="Rounsley S."/>
            <person name="Young S.K."/>
            <person name="LaButti K."/>
            <person name="Pushparaj V."/>
            <person name="DeCaprio D."/>
            <person name="Crawford M."/>
            <person name="Koehrsen M."/>
            <person name="Engels R."/>
            <person name="Montgomery P."/>
            <person name="Pearson M."/>
            <person name="Howarth C."/>
            <person name="Larson L."/>
            <person name="Luoma S."/>
            <person name="White J."/>
            <person name="Alvarado L."/>
            <person name="Kodira C.D."/>
            <person name="Zeng Q."/>
            <person name="Oleary S."/>
            <person name="Yandava C."/>
            <person name="Denning D.W."/>
            <person name="Nierman W.C."/>
            <person name="Milne T."/>
            <person name="Madden K."/>
        </authorList>
    </citation>
    <scope>NUCLEOTIDE SEQUENCE [LARGE SCALE GENOMIC DNA]</scope>
    <source>
        <strain>NIH 2624 / FGSC A1156</strain>
    </source>
</reference>
<keyword id="KW-0119">Carbohydrate metabolism</keyword>
<keyword id="KW-0134">Cell wall</keyword>
<keyword id="KW-0136">Cellulose degradation</keyword>
<keyword id="KW-0326">Glycosidase</keyword>
<keyword id="KW-0378">Hydrolase</keyword>
<keyword id="KW-0624">Polysaccharide degradation</keyword>
<keyword id="KW-1185">Reference proteome</keyword>
<keyword id="KW-0964">Secreted</keyword>
<keyword id="KW-0732">Signal</keyword>
<gene>
    <name type="primary">btgE</name>
    <name type="ORF">ATEG_07755</name>
</gene>
<dbReference type="EC" id="3.2.1.21"/>
<dbReference type="EMBL" id="CH476604">
    <property type="protein sequence ID" value="EAU32017.1"/>
    <property type="molecule type" value="Genomic_DNA"/>
</dbReference>
<dbReference type="RefSeq" id="XP_001216376.1">
    <property type="nucleotide sequence ID" value="XM_001216376.1"/>
</dbReference>
<dbReference type="SMR" id="Q0CEX9"/>
<dbReference type="STRING" id="341663.Q0CEX9"/>
<dbReference type="EnsemblFungi" id="EAU32017">
    <property type="protein sequence ID" value="EAU32017"/>
    <property type="gene ID" value="ATEG_07755"/>
</dbReference>
<dbReference type="GeneID" id="4322886"/>
<dbReference type="VEuPathDB" id="FungiDB:ATEG_07755"/>
<dbReference type="eggNOG" id="ENOG502QS0R">
    <property type="taxonomic scope" value="Eukaryota"/>
</dbReference>
<dbReference type="HOGENOM" id="CLU_027285_2_1_1"/>
<dbReference type="OMA" id="VVCPYAT"/>
<dbReference type="OrthoDB" id="4082933at2759"/>
<dbReference type="UniPathway" id="UPA00696"/>
<dbReference type="Proteomes" id="UP000007963">
    <property type="component" value="Unassembled WGS sequence"/>
</dbReference>
<dbReference type="GO" id="GO:0009986">
    <property type="term" value="C:cell surface"/>
    <property type="evidence" value="ECO:0007669"/>
    <property type="project" value="TreeGrafter"/>
</dbReference>
<dbReference type="GO" id="GO:0005576">
    <property type="term" value="C:extracellular region"/>
    <property type="evidence" value="ECO:0007669"/>
    <property type="project" value="UniProtKB-KW"/>
</dbReference>
<dbReference type="GO" id="GO:0009277">
    <property type="term" value="C:fungal-type cell wall"/>
    <property type="evidence" value="ECO:0007669"/>
    <property type="project" value="TreeGrafter"/>
</dbReference>
<dbReference type="GO" id="GO:0042973">
    <property type="term" value="F:glucan endo-1,3-beta-D-glucosidase activity"/>
    <property type="evidence" value="ECO:0007669"/>
    <property type="project" value="TreeGrafter"/>
</dbReference>
<dbReference type="GO" id="GO:0071555">
    <property type="term" value="P:cell wall organization"/>
    <property type="evidence" value="ECO:0007669"/>
    <property type="project" value="TreeGrafter"/>
</dbReference>
<dbReference type="GO" id="GO:0030245">
    <property type="term" value="P:cellulose catabolic process"/>
    <property type="evidence" value="ECO:0007669"/>
    <property type="project" value="UniProtKB-UniPathway"/>
</dbReference>
<dbReference type="Gene3D" id="3.20.20.80">
    <property type="entry name" value="Glycosidases"/>
    <property type="match status" value="2"/>
</dbReference>
<dbReference type="InterPro" id="IPR050732">
    <property type="entry name" value="Beta-glucan_modifiers"/>
</dbReference>
<dbReference type="InterPro" id="IPR017853">
    <property type="entry name" value="Glycoside_hydrolase_SF"/>
</dbReference>
<dbReference type="PANTHER" id="PTHR16631:SF24">
    <property type="entry name" value="FAMILY 17 GLUCOSIDASE SCW11-RELATED"/>
    <property type="match status" value="1"/>
</dbReference>
<dbReference type="PANTHER" id="PTHR16631">
    <property type="entry name" value="GLUCAN 1,3-BETA-GLUCOSIDASE"/>
    <property type="match status" value="1"/>
</dbReference>
<dbReference type="SUPFAM" id="SSF51445">
    <property type="entry name" value="(Trans)glycosidases"/>
    <property type="match status" value="1"/>
</dbReference>
<proteinExistence type="inferred from homology"/>